<dbReference type="EMBL" id="EF067920">
    <property type="protein sequence ID" value="ABK20632.1"/>
    <property type="molecule type" value="Genomic_DNA"/>
</dbReference>
<dbReference type="RefSeq" id="YP_874409.1">
    <property type="nucleotide sequence ID" value="NC_008588.1"/>
</dbReference>
<dbReference type="SMR" id="A0T0D4"/>
<dbReference type="STRING" id="556484.A0T0D4"/>
<dbReference type="GeneID" id="4524584"/>
<dbReference type="InParanoid" id="A0T0D4"/>
<dbReference type="Proteomes" id="UP000000759">
    <property type="component" value="Chloroplast"/>
</dbReference>
<dbReference type="GO" id="GO:0009507">
    <property type="term" value="C:chloroplast"/>
    <property type="evidence" value="ECO:0007669"/>
    <property type="project" value="UniProtKB-SubCell"/>
</dbReference>
<dbReference type="GO" id="GO:0005763">
    <property type="term" value="C:mitochondrial small ribosomal subunit"/>
    <property type="evidence" value="ECO:0007669"/>
    <property type="project" value="TreeGrafter"/>
</dbReference>
<dbReference type="GO" id="GO:0070181">
    <property type="term" value="F:small ribosomal subunit rRNA binding"/>
    <property type="evidence" value="ECO:0007669"/>
    <property type="project" value="TreeGrafter"/>
</dbReference>
<dbReference type="GO" id="GO:0003735">
    <property type="term" value="F:structural constituent of ribosome"/>
    <property type="evidence" value="ECO:0007669"/>
    <property type="project" value="InterPro"/>
</dbReference>
<dbReference type="GO" id="GO:0006412">
    <property type="term" value="P:translation"/>
    <property type="evidence" value="ECO:0007669"/>
    <property type="project" value="UniProtKB-UniRule"/>
</dbReference>
<dbReference type="Gene3D" id="4.10.640.10">
    <property type="entry name" value="Ribosomal protein S18"/>
    <property type="match status" value="1"/>
</dbReference>
<dbReference type="HAMAP" id="MF_00270">
    <property type="entry name" value="Ribosomal_bS18"/>
    <property type="match status" value="1"/>
</dbReference>
<dbReference type="InterPro" id="IPR001648">
    <property type="entry name" value="Ribosomal_bS18"/>
</dbReference>
<dbReference type="InterPro" id="IPR018275">
    <property type="entry name" value="Ribosomal_bS18_CS"/>
</dbReference>
<dbReference type="InterPro" id="IPR036870">
    <property type="entry name" value="Ribosomal_bS18_sf"/>
</dbReference>
<dbReference type="NCBIfam" id="TIGR00165">
    <property type="entry name" value="S18"/>
    <property type="match status" value="1"/>
</dbReference>
<dbReference type="PANTHER" id="PTHR13479">
    <property type="entry name" value="30S RIBOSOMAL PROTEIN S18"/>
    <property type="match status" value="1"/>
</dbReference>
<dbReference type="PANTHER" id="PTHR13479:SF40">
    <property type="entry name" value="SMALL RIBOSOMAL SUBUNIT PROTEIN BS18M"/>
    <property type="match status" value="1"/>
</dbReference>
<dbReference type="Pfam" id="PF01084">
    <property type="entry name" value="Ribosomal_S18"/>
    <property type="match status" value="1"/>
</dbReference>
<dbReference type="PRINTS" id="PR00974">
    <property type="entry name" value="RIBOSOMALS18"/>
</dbReference>
<dbReference type="SUPFAM" id="SSF46911">
    <property type="entry name" value="Ribosomal protein S18"/>
    <property type="match status" value="1"/>
</dbReference>
<dbReference type="PROSITE" id="PS00057">
    <property type="entry name" value="RIBOSOMAL_S18"/>
    <property type="match status" value="1"/>
</dbReference>
<geneLocation type="chloroplast"/>
<keyword id="KW-0150">Chloroplast</keyword>
<keyword id="KW-0934">Plastid</keyword>
<keyword id="KW-1185">Reference proteome</keyword>
<keyword id="KW-0687">Ribonucleoprotein</keyword>
<keyword id="KW-0689">Ribosomal protein</keyword>
<keyword id="KW-0694">RNA-binding</keyword>
<keyword id="KW-0699">rRNA-binding</keyword>
<comment type="subunit">
    <text>Part of the 30S ribosomal subunit.</text>
</comment>
<comment type="subcellular location">
    <subcellularLocation>
        <location>Plastid</location>
        <location>Chloroplast</location>
    </subcellularLocation>
</comment>
<comment type="similarity">
    <text evidence="1">Belongs to the bacterial ribosomal protein bS18 family.</text>
</comment>
<evidence type="ECO:0000255" key="1">
    <source>
        <dbReference type="HAMAP-Rule" id="MF_00270"/>
    </source>
</evidence>
<evidence type="ECO:0000305" key="2"/>
<organism>
    <name type="scientific">Phaeodactylum tricornutum (strain CCAP 1055/1)</name>
    <dbReference type="NCBI Taxonomy" id="556484"/>
    <lineage>
        <taxon>Eukaryota</taxon>
        <taxon>Sar</taxon>
        <taxon>Stramenopiles</taxon>
        <taxon>Ochrophyta</taxon>
        <taxon>Bacillariophyta</taxon>
        <taxon>Bacillariophyceae</taxon>
        <taxon>Bacillariophycidae</taxon>
        <taxon>Naviculales</taxon>
        <taxon>Phaeodactylaceae</taxon>
        <taxon>Phaeodactylum</taxon>
    </lineage>
</organism>
<gene>
    <name evidence="1" type="primary">rps18</name>
</gene>
<sequence>MVSKKQKLSPISLNQNIDYKDIDLLTLFVTEQGKILPRRATGVTVQQQRRLAKAIKRARVLSLFPFVASNSI</sequence>
<accession>A0T0D4</accession>
<name>RR18_PHATC</name>
<reference key="1">
    <citation type="journal article" date="2007" name="Mol. Genet. Genomics">
        <title>Chloroplast genomes of the diatoms Phaeodactylum tricornutum and Thalassiosira pseudonana: comparison with other plastid genomes of the red lineage.</title>
        <authorList>
            <person name="Oudot-Le Secq M.-P."/>
            <person name="Grimwood J."/>
            <person name="Shapiro H."/>
            <person name="Armbrust E.V."/>
            <person name="Bowler C."/>
            <person name="Green B.R."/>
        </authorList>
    </citation>
    <scope>NUCLEOTIDE SEQUENCE [LARGE SCALE GENOMIC DNA]</scope>
    <source>
        <strain>CCAP 1055/1</strain>
    </source>
</reference>
<proteinExistence type="inferred from homology"/>
<feature type="chain" id="PRO_0000276897" description="Small ribosomal subunit protein bS18c">
    <location>
        <begin position="1"/>
        <end position="72"/>
    </location>
</feature>
<protein>
    <recommendedName>
        <fullName evidence="1">Small ribosomal subunit protein bS18c</fullName>
    </recommendedName>
    <alternativeName>
        <fullName evidence="2">30S ribosomal protein S18, chloroplastic</fullName>
    </alternativeName>
</protein>